<sequence length="50" mass="5658">MAQKKASLACVECGSRNYSIGVSSTPKPTRLEVNKFCKYCKTYTLHKETR</sequence>
<gene>
    <name evidence="1" type="primary">rpmG2</name>
    <name type="ordered locus">SpyM3_1697.1</name>
</gene>
<reference key="1">
    <citation type="journal article" date="2002" name="Proc. Natl. Acad. Sci. U.S.A.">
        <title>Genome sequence of a serotype M3 strain of group A Streptococcus: phage-encoded toxins, the high-virulence phenotype, and clone emergence.</title>
        <authorList>
            <person name="Beres S.B."/>
            <person name="Sylva G.L."/>
            <person name="Barbian K.D."/>
            <person name="Lei B."/>
            <person name="Hoff J.S."/>
            <person name="Mammarella N.D."/>
            <person name="Liu M.-Y."/>
            <person name="Smoot J.C."/>
            <person name="Porcella S.F."/>
            <person name="Parkins L.D."/>
            <person name="Campbell D.S."/>
            <person name="Smith T.M."/>
            <person name="McCormick J.K."/>
            <person name="Leung D.Y.M."/>
            <person name="Schlievert P.M."/>
            <person name="Musser J.M."/>
        </authorList>
    </citation>
    <scope>NUCLEOTIDE SEQUENCE [LARGE SCALE GENOMIC DNA]</scope>
    <source>
        <strain>ATCC BAA-595 / MGAS315</strain>
    </source>
</reference>
<protein>
    <recommendedName>
        <fullName evidence="1">Large ribosomal subunit protein bL33B</fullName>
    </recommendedName>
    <alternativeName>
        <fullName evidence="1">50S ribosomal protein L33 2</fullName>
    </alternativeName>
</protein>
<organism>
    <name type="scientific">Streptococcus pyogenes serotype M3 (strain ATCC BAA-595 / MGAS315)</name>
    <dbReference type="NCBI Taxonomy" id="198466"/>
    <lineage>
        <taxon>Bacteria</taxon>
        <taxon>Bacillati</taxon>
        <taxon>Bacillota</taxon>
        <taxon>Bacilli</taxon>
        <taxon>Lactobacillales</taxon>
        <taxon>Streptococcaceae</taxon>
        <taxon>Streptococcus</taxon>
    </lineage>
</organism>
<accession>P0DE42</accession>
<accession>Q877X6</accession>
<feature type="chain" id="PRO_0000356731" description="Large ribosomal subunit protein bL33B">
    <location>
        <begin position="1"/>
        <end position="50"/>
    </location>
</feature>
<evidence type="ECO:0000255" key="1">
    <source>
        <dbReference type="HAMAP-Rule" id="MF_00294"/>
    </source>
</evidence>
<name>RL332_STRP3</name>
<dbReference type="EMBL" id="AE014074">
    <property type="status" value="NOT_ANNOTATED_CDS"/>
    <property type="molecule type" value="Genomic_DNA"/>
</dbReference>
<dbReference type="SMR" id="P0DE42"/>
<dbReference type="Proteomes" id="UP000000564">
    <property type="component" value="Chromosome"/>
</dbReference>
<dbReference type="GO" id="GO:0005737">
    <property type="term" value="C:cytoplasm"/>
    <property type="evidence" value="ECO:0007669"/>
    <property type="project" value="UniProtKB-ARBA"/>
</dbReference>
<dbReference type="GO" id="GO:1990904">
    <property type="term" value="C:ribonucleoprotein complex"/>
    <property type="evidence" value="ECO:0007669"/>
    <property type="project" value="UniProtKB-KW"/>
</dbReference>
<dbReference type="GO" id="GO:0005840">
    <property type="term" value="C:ribosome"/>
    <property type="evidence" value="ECO:0007669"/>
    <property type="project" value="UniProtKB-KW"/>
</dbReference>
<dbReference type="GO" id="GO:0003735">
    <property type="term" value="F:structural constituent of ribosome"/>
    <property type="evidence" value="ECO:0007669"/>
    <property type="project" value="InterPro"/>
</dbReference>
<dbReference type="GO" id="GO:0006412">
    <property type="term" value="P:translation"/>
    <property type="evidence" value="ECO:0007669"/>
    <property type="project" value="UniProtKB-UniRule"/>
</dbReference>
<dbReference type="Gene3D" id="2.20.28.120">
    <property type="entry name" value="Ribosomal protein L33"/>
    <property type="match status" value="1"/>
</dbReference>
<dbReference type="HAMAP" id="MF_00294">
    <property type="entry name" value="Ribosomal_bL33"/>
    <property type="match status" value="1"/>
</dbReference>
<dbReference type="InterPro" id="IPR001705">
    <property type="entry name" value="Ribosomal_bL33"/>
</dbReference>
<dbReference type="InterPro" id="IPR038584">
    <property type="entry name" value="Ribosomal_bL33_sf"/>
</dbReference>
<dbReference type="InterPro" id="IPR011332">
    <property type="entry name" value="Ribosomal_zn-bd"/>
</dbReference>
<dbReference type="NCBIfam" id="NF001764">
    <property type="entry name" value="PRK00504.1"/>
    <property type="match status" value="1"/>
</dbReference>
<dbReference type="NCBIfam" id="TIGR01023">
    <property type="entry name" value="rpmG_bact"/>
    <property type="match status" value="1"/>
</dbReference>
<dbReference type="Pfam" id="PF00471">
    <property type="entry name" value="Ribosomal_L33"/>
    <property type="match status" value="1"/>
</dbReference>
<dbReference type="SUPFAM" id="SSF57829">
    <property type="entry name" value="Zn-binding ribosomal proteins"/>
    <property type="match status" value="1"/>
</dbReference>
<comment type="similarity">
    <text evidence="1">Belongs to the bacterial ribosomal protein bL33 family.</text>
</comment>
<keyword id="KW-0687">Ribonucleoprotein</keyword>
<keyword id="KW-0689">Ribosomal protein</keyword>
<proteinExistence type="inferred from homology"/>